<proteinExistence type="inferred from homology"/>
<protein>
    <recommendedName>
        <fullName evidence="1">Ribonuclease PH</fullName>
        <shortName evidence="1">RNase PH</shortName>
        <ecNumber evidence="1">2.7.7.56</ecNumber>
    </recommendedName>
    <alternativeName>
        <fullName evidence="1">tRNA nucleotidyltransferase</fullName>
    </alternativeName>
</protein>
<gene>
    <name evidence="1" type="primary">rph</name>
    <name type="ordered locus">MXAN_2004</name>
</gene>
<keyword id="KW-0548">Nucleotidyltransferase</keyword>
<keyword id="KW-1185">Reference proteome</keyword>
<keyword id="KW-0694">RNA-binding</keyword>
<keyword id="KW-0698">rRNA processing</keyword>
<keyword id="KW-0808">Transferase</keyword>
<keyword id="KW-0819">tRNA processing</keyword>
<keyword id="KW-0820">tRNA-binding</keyword>
<reference key="1">
    <citation type="journal article" date="2006" name="Proc. Natl. Acad. Sci. U.S.A.">
        <title>Evolution of sensory complexity recorded in a myxobacterial genome.</title>
        <authorList>
            <person name="Goldman B.S."/>
            <person name="Nierman W.C."/>
            <person name="Kaiser D."/>
            <person name="Slater S.C."/>
            <person name="Durkin A.S."/>
            <person name="Eisen J.A."/>
            <person name="Ronning C.M."/>
            <person name="Barbazuk W.B."/>
            <person name="Blanchard M."/>
            <person name="Field C."/>
            <person name="Halling C."/>
            <person name="Hinkle G."/>
            <person name="Iartchuk O."/>
            <person name="Kim H.S."/>
            <person name="Mackenzie C."/>
            <person name="Madupu R."/>
            <person name="Miller N."/>
            <person name="Shvartsbeyn A."/>
            <person name="Sullivan S.A."/>
            <person name="Vaudin M."/>
            <person name="Wiegand R."/>
            <person name="Kaplan H.B."/>
        </authorList>
    </citation>
    <scope>NUCLEOTIDE SEQUENCE [LARGE SCALE GENOMIC DNA]</scope>
    <source>
        <strain>DK1622</strain>
    </source>
</reference>
<comment type="function">
    <text evidence="1">Phosphorolytic 3'-5' exoribonuclease that plays an important role in tRNA 3'-end maturation. Removes nucleotide residues following the 3'-CCA terminus of tRNAs; can also add nucleotides to the ends of RNA molecules by using nucleoside diphosphates as substrates, but this may not be physiologically important. Probably plays a role in initiation of 16S rRNA degradation (leading to ribosome degradation) during starvation.</text>
</comment>
<comment type="catalytic activity">
    <reaction evidence="1">
        <text>tRNA(n+1) + phosphate = tRNA(n) + a ribonucleoside 5'-diphosphate</text>
        <dbReference type="Rhea" id="RHEA:10628"/>
        <dbReference type="Rhea" id="RHEA-COMP:17343"/>
        <dbReference type="Rhea" id="RHEA-COMP:17344"/>
        <dbReference type="ChEBI" id="CHEBI:43474"/>
        <dbReference type="ChEBI" id="CHEBI:57930"/>
        <dbReference type="ChEBI" id="CHEBI:173114"/>
        <dbReference type="EC" id="2.7.7.56"/>
    </reaction>
</comment>
<comment type="subunit">
    <text evidence="1">Homohexameric ring arranged as a trimer of dimers.</text>
</comment>
<comment type="similarity">
    <text evidence="1">Belongs to the RNase PH family.</text>
</comment>
<accession>Q1DAT4</accession>
<dbReference type="EC" id="2.7.7.56" evidence="1"/>
<dbReference type="EMBL" id="CP000113">
    <property type="protein sequence ID" value="ABF87690.1"/>
    <property type="molecule type" value="Genomic_DNA"/>
</dbReference>
<dbReference type="RefSeq" id="WP_011552094.1">
    <property type="nucleotide sequence ID" value="NC_008095.1"/>
</dbReference>
<dbReference type="SMR" id="Q1DAT4"/>
<dbReference type="STRING" id="246197.MXAN_2004"/>
<dbReference type="EnsemblBacteria" id="ABF87690">
    <property type="protein sequence ID" value="ABF87690"/>
    <property type="gene ID" value="MXAN_2004"/>
</dbReference>
<dbReference type="GeneID" id="41359414"/>
<dbReference type="KEGG" id="mxa:MXAN_2004"/>
<dbReference type="eggNOG" id="COG0689">
    <property type="taxonomic scope" value="Bacteria"/>
</dbReference>
<dbReference type="HOGENOM" id="CLU_050858_0_0_7"/>
<dbReference type="OrthoDB" id="9802265at2"/>
<dbReference type="Proteomes" id="UP000002402">
    <property type="component" value="Chromosome"/>
</dbReference>
<dbReference type="GO" id="GO:0000175">
    <property type="term" value="F:3'-5'-RNA exonuclease activity"/>
    <property type="evidence" value="ECO:0007669"/>
    <property type="project" value="UniProtKB-UniRule"/>
</dbReference>
<dbReference type="GO" id="GO:0000049">
    <property type="term" value="F:tRNA binding"/>
    <property type="evidence" value="ECO:0007669"/>
    <property type="project" value="UniProtKB-UniRule"/>
</dbReference>
<dbReference type="GO" id="GO:0009022">
    <property type="term" value="F:tRNA nucleotidyltransferase activity"/>
    <property type="evidence" value="ECO:0007669"/>
    <property type="project" value="UniProtKB-UniRule"/>
</dbReference>
<dbReference type="GO" id="GO:0016075">
    <property type="term" value="P:rRNA catabolic process"/>
    <property type="evidence" value="ECO:0007669"/>
    <property type="project" value="UniProtKB-UniRule"/>
</dbReference>
<dbReference type="GO" id="GO:0006364">
    <property type="term" value="P:rRNA processing"/>
    <property type="evidence" value="ECO:0007669"/>
    <property type="project" value="UniProtKB-KW"/>
</dbReference>
<dbReference type="GO" id="GO:0008033">
    <property type="term" value="P:tRNA processing"/>
    <property type="evidence" value="ECO:0007669"/>
    <property type="project" value="UniProtKB-UniRule"/>
</dbReference>
<dbReference type="CDD" id="cd11362">
    <property type="entry name" value="RNase_PH_bact"/>
    <property type="match status" value="1"/>
</dbReference>
<dbReference type="FunFam" id="3.30.230.70:FF:000003">
    <property type="entry name" value="Ribonuclease PH"/>
    <property type="match status" value="1"/>
</dbReference>
<dbReference type="Gene3D" id="3.30.230.70">
    <property type="entry name" value="GHMP Kinase, N-terminal domain"/>
    <property type="match status" value="1"/>
</dbReference>
<dbReference type="HAMAP" id="MF_00564">
    <property type="entry name" value="RNase_PH"/>
    <property type="match status" value="1"/>
</dbReference>
<dbReference type="InterPro" id="IPR001247">
    <property type="entry name" value="ExoRNase_PH_dom1"/>
</dbReference>
<dbReference type="InterPro" id="IPR015847">
    <property type="entry name" value="ExoRNase_PH_dom2"/>
</dbReference>
<dbReference type="InterPro" id="IPR036345">
    <property type="entry name" value="ExoRNase_PH_dom2_sf"/>
</dbReference>
<dbReference type="InterPro" id="IPR027408">
    <property type="entry name" value="PNPase/RNase_PH_dom_sf"/>
</dbReference>
<dbReference type="InterPro" id="IPR020568">
    <property type="entry name" value="Ribosomal_Su5_D2-typ_SF"/>
</dbReference>
<dbReference type="InterPro" id="IPR050080">
    <property type="entry name" value="RNase_PH"/>
</dbReference>
<dbReference type="InterPro" id="IPR002381">
    <property type="entry name" value="RNase_PH_bac-type"/>
</dbReference>
<dbReference type="InterPro" id="IPR018336">
    <property type="entry name" value="RNase_PH_CS"/>
</dbReference>
<dbReference type="NCBIfam" id="TIGR01966">
    <property type="entry name" value="RNasePH"/>
    <property type="match status" value="1"/>
</dbReference>
<dbReference type="PANTHER" id="PTHR11953">
    <property type="entry name" value="EXOSOME COMPLEX COMPONENT"/>
    <property type="match status" value="1"/>
</dbReference>
<dbReference type="PANTHER" id="PTHR11953:SF0">
    <property type="entry name" value="EXOSOME COMPLEX COMPONENT RRP41"/>
    <property type="match status" value="1"/>
</dbReference>
<dbReference type="Pfam" id="PF01138">
    <property type="entry name" value="RNase_PH"/>
    <property type="match status" value="1"/>
</dbReference>
<dbReference type="Pfam" id="PF03725">
    <property type="entry name" value="RNase_PH_C"/>
    <property type="match status" value="1"/>
</dbReference>
<dbReference type="SUPFAM" id="SSF55666">
    <property type="entry name" value="Ribonuclease PH domain 2-like"/>
    <property type="match status" value="1"/>
</dbReference>
<dbReference type="SUPFAM" id="SSF54211">
    <property type="entry name" value="Ribosomal protein S5 domain 2-like"/>
    <property type="match status" value="1"/>
</dbReference>
<dbReference type="PROSITE" id="PS01277">
    <property type="entry name" value="RIBONUCLEASE_PH"/>
    <property type="match status" value="1"/>
</dbReference>
<evidence type="ECO:0000255" key="1">
    <source>
        <dbReference type="HAMAP-Rule" id="MF_00564"/>
    </source>
</evidence>
<organism>
    <name type="scientific">Myxococcus xanthus (strain DK1622)</name>
    <dbReference type="NCBI Taxonomy" id="246197"/>
    <lineage>
        <taxon>Bacteria</taxon>
        <taxon>Pseudomonadati</taxon>
        <taxon>Myxococcota</taxon>
        <taxon>Myxococcia</taxon>
        <taxon>Myxococcales</taxon>
        <taxon>Cystobacterineae</taxon>
        <taxon>Myxococcaceae</taxon>
        <taxon>Myxococcus</taxon>
    </lineage>
</organism>
<sequence>MRSFQRGALDLRPVVLTPGVSRYAEGSVQVEFGHTKVLVTCSTEERVPPHLMGKGSGWVTAEYGMLPRATHSRNQRESAKGKQTGRTMEIQRLIGRSLRAAVDLSTLGPRTLTLDCDVLQADGGTRTASITGAYVALVLALRSLQKAGTISKLPKLTPLAAVSVGIVKGEVRVDLDYDEDSTADVDLNLVATADGRMVELQGTAEHQLFDRKALDAMVDGGLAAIQKLTAAQAQVLG</sequence>
<feature type="chain" id="PRO_1000024837" description="Ribonuclease PH">
    <location>
        <begin position="1"/>
        <end position="237"/>
    </location>
</feature>
<feature type="binding site" evidence="1">
    <location>
        <position position="86"/>
    </location>
    <ligand>
        <name>phosphate</name>
        <dbReference type="ChEBI" id="CHEBI:43474"/>
        <note>substrate</note>
    </ligand>
</feature>
<feature type="binding site" evidence="1">
    <location>
        <begin position="124"/>
        <end position="126"/>
    </location>
    <ligand>
        <name>phosphate</name>
        <dbReference type="ChEBI" id="CHEBI:43474"/>
        <note>substrate</note>
    </ligand>
</feature>
<name>RNPH_MYXXD</name>